<organism>
    <name type="scientific">Nitratidesulfovibrio vulgaris (strain DSM 19637 / Miyazaki F)</name>
    <name type="common">Desulfovibrio vulgaris</name>
    <dbReference type="NCBI Taxonomy" id="883"/>
    <lineage>
        <taxon>Bacteria</taxon>
        <taxon>Pseudomonadati</taxon>
        <taxon>Thermodesulfobacteriota</taxon>
        <taxon>Desulfovibrionia</taxon>
        <taxon>Desulfovibrionales</taxon>
        <taxon>Desulfovibrionaceae</taxon>
        <taxon>Nitratidesulfovibrio</taxon>
    </lineage>
</organism>
<reference key="1">
    <citation type="submission" date="2008-10" db="EMBL/GenBank/DDBJ databases">
        <title>Complete sequence of Desulfovibrio vulgaris str. 'Miyazaki F'.</title>
        <authorList>
            <person name="Lucas S."/>
            <person name="Copeland A."/>
            <person name="Lapidus A."/>
            <person name="Glavina del Rio T."/>
            <person name="Dalin E."/>
            <person name="Tice H."/>
            <person name="Bruce D."/>
            <person name="Goodwin L."/>
            <person name="Pitluck S."/>
            <person name="Sims D."/>
            <person name="Brettin T."/>
            <person name="Detter J.C."/>
            <person name="Han C."/>
            <person name="Larimer F."/>
            <person name="Land M."/>
            <person name="Hauser L."/>
            <person name="Kyrpides N."/>
            <person name="Mikhailova N."/>
            <person name="Hazen T.C."/>
            <person name="Richardson P."/>
        </authorList>
    </citation>
    <scope>NUCLEOTIDE SEQUENCE [LARGE SCALE GENOMIC DNA]</scope>
    <source>
        <strain>DSM 19637 / Miyazaki F</strain>
    </source>
</reference>
<dbReference type="EMBL" id="CP001197">
    <property type="protein sequence ID" value="ACL07832.1"/>
    <property type="molecule type" value="Genomic_DNA"/>
</dbReference>
<dbReference type="SMR" id="B8DP00"/>
<dbReference type="STRING" id="883.DvMF_0876"/>
<dbReference type="KEGG" id="dvm:DvMF_0876"/>
<dbReference type="eggNOG" id="COG0468">
    <property type="taxonomic scope" value="Bacteria"/>
</dbReference>
<dbReference type="HOGENOM" id="CLU_040469_1_2_7"/>
<dbReference type="OrthoDB" id="9776733at2"/>
<dbReference type="GO" id="GO:0005829">
    <property type="term" value="C:cytosol"/>
    <property type="evidence" value="ECO:0007669"/>
    <property type="project" value="TreeGrafter"/>
</dbReference>
<dbReference type="GO" id="GO:0005524">
    <property type="term" value="F:ATP binding"/>
    <property type="evidence" value="ECO:0007669"/>
    <property type="project" value="UniProtKB-UniRule"/>
</dbReference>
<dbReference type="GO" id="GO:0016887">
    <property type="term" value="F:ATP hydrolysis activity"/>
    <property type="evidence" value="ECO:0007669"/>
    <property type="project" value="InterPro"/>
</dbReference>
<dbReference type="GO" id="GO:0140664">
    <property type="term" value="F:ATP-dependent DNA damage sensor activity"/>
    <property type="evidence" value="ECO:0007669"/>
    <property type="project" value="InterPro"/>
</dbReference>
<dbReference type="GO" id="GO:0003684">
    <property type="term" value="F:damaged DNA binding"/>
    <property type="evidence" value="ECO:0007669"/>
    <property type="project" value="UniProtKB-UniRule"/>
</dbReference>
<dbReference type="GO" id="GO:0003697">
    <property type="term" value="F:single-stranded DNA binding"/>
    <property type="evidence" value="ECO:0007669"/>
    <property type="project" value="UniProtKB-UniRule"/>
</dbReference>
<dbReference type="GO" id="GO:0006310">
    <property type="term" value="P:DNA recombination"/>
    <property type="evidence" value="ECO:0007669"/>
    <property type="project" value="UniProtKB-UniRule"/>
</dbReference>
<dbReference type="GO" id="GO:0006281">
    <property type="term" value="P:DNA repair"/>
    <property type="evidence" value="ECO:0007669"/>
    <property type="project" value="UniProtKB-UniRule"/>
</dbReference>
<dbReference type="GO" id="GO:0009432">
    <property type="term" value="P:SOS response"/>
    <property type="evidence" value="ECO:0007669"/>
    <property type="project" value="UniProtKB-UniRule"/>
</dbReference>
<dbReference type="CDD" id="cd00983">
    <property type="entry name" value="RecA"/>
    <property type="match status" value="1"/>
</dbReference>
<dbReference type="FunFam" id="3.40.50.300:FF:000087">
    <property type="entry name" value="Recombinase RecA"/>
    <property type="match status" value="1"/>
</dbReference>
<dbReference type="Gene3D" id="3.40.50.300">
    <property type="entry name" value="P-loop containing nucleotide triphosphate hydrolases"/>
    <property type="match status" value="1"/>
</dbReference>
<dbReference type="HAMAP" id="MF_00268">
    <property type="entry name" value="RecA"/>
    <property type="match status" value="1"/>
</dbReference>
<dbReference type="InterPro" id="IPR003593">
    <property type="entry name" value="AAA+_ATPase"/>
</dbReference>
<dbReference type="InterPro" id="IPR013765">
    <property type="entry name" value="DNA_recomb/repair_RecA"/>
</dbReference>
<dbReference type="InterPro" id="IPR020584">
    <property type="entry name" value="DNA_recomb/repair_RecA_CS"/>
</dbReference>
<dbReference type="InterPro" id="IPR027417">
    <property type="entry name" value="P-loop_NTPase"/>
</dbReference>
<dbReference type="InterPro" id="IPR049261">
    <property type="entry name" value="RecA-like_C"/>
</dbReference>
<dbReference type="InterPro" id="IPR049428">
    <property type="entry name" value="RecA-like_N"/>
</dbReference>
<dbReference type="InterPro" id="IPR020588">
    <property type="entry name" value="RecA_ATP-bd"/>
</dbReference>
<dbReference type="InterPro" id="IPR023400">
    <property type="entry name" value="RecA_C_sf"/>
</dbReference>
<dbReference type="InterPro" id="IPR020587">
    <property type="entry name" value="RecA_monomer-monomer_interface"/>
</dbReference>
<dbReference type="NCBIfam" id="TIGR02012">
    <property type="entry name" value="tigrfam_recA"/>
    <property type="match status" value="1"/>
</dbReference>
<dbReference type="PANTHER" id="PTHR45900:SF1">
    <property type="entry name" value="MITOCHONDRIAL DNA REPAIR PROTEIN RECA HOMOLOG-RELATED"/>
    <property type="match status" value="1"/>
</dbReference>
<dbReference type="PANTHER" id="PTHR45900">
    <property type="entry name" value="RECA"/>
    <property type="match status" value="1"/>
</dbReference>
<dbReference type="Pfam" id="PF00154">
    <property type="entry name" value="RecA"/>
    <property type="match status" value="1"/>
</dbReference>
<dbReference type="Pfam" id="PF21096">
    <property type="entry name" value="RecA_C"/>
    <property type="match status" value="1"/>
</dbReference>
<dbReference type="PRINTS" id="PR00142">
    <property type="entry name" value="RECA"/>
</dbReference>
<dbReference type="SMART" id="SM00382">
    <property type="entry name" value="AAA"/>
    <property type="match status" value="1"/>
</dbReference>
<dbReference type="SUPFAM" id="SSF52540">
    <property type="entry name" value="P-loop containing nucleoside triphosphate hydrolases"/>
    <property type="match status" value="1"/>
</dbReference>
<dbReference type="SUPFAM" id="SSF54752">
    <property type="entry name" value="RecA protein, C-terminal domain"/>
    <property type="match status" value="1"/>
</dbReference>
<dbReference type="PROSITE" id="PS00321">
    <property type="entry name" value="RECA_1"/>
    <property type="match status" value="1"/>
</dbReference>
<dbReference type="PROSITE" id="PS50162">
    <property type="entry name" value="RECA_2"/>
    <property type="match status" value="1"/>
</dbReference>
<dbReference type="PROSITE" id="PS50163">
    <property type="entry name" value="RECA_3"/>
    <property type="match status" value="1"/>
</dbReference>
<sequence length="357" mass="38640">MAKKPALTPEEMRREALSTALSTIERKYGQGSVMKLSDTAHVNIPVIPTGSIGLDLALGVGGIPRGRVSEIYGPESSGKTTLALHIIAECQKLGGTAAFIDAEHALDTNYARRLGVKTDELLISQPDFGEQALDIADMLVRSSAVDIVVIDSVAALIPQAELEGVMGEMQVGGQARLMSHALRKLTGTIHKSRTAVIFINQIRMKIGTMGYGNPETTTGGNALKFYSSIRMDIRKIQTLKDKEEVYGSRTRVKVVKNKVAPPFREALFDILYGTGISRTGELIDLGSDVGIIEKSGSWFAFGSERLGQGKENVRALLEENEALRLNVEAKLIEHLGMMPSKVVDPDDNAGAMDDDEF</sequence>
<protein>
    <recommendedName>
        <fullName evidence="1">Protein RecA</fullName>
    </recommendedName>
    <alternativeName>
        <fullName evidence="1">Recombinase A</fullName>
    </alternativeName>
</protein>
<name>RECA_NITV9</name>
<evidence type="ECO:0000255" key="1">
    <source>
        <dbReference type="HAMAP-Rule" id="MF_00268"/>
    </source>
</evidence>
<keyword id="KW-0067">ATP-binding</keyword>
<keyword id="KW-0963">Cytoplasm</keyword>
<keyword id="KW-0227">DNA damage</keyword>
<keyword id="KW-0233">DNA recombination</keyword>
<keyword id="KW-0234">DNA repair</keyword>
<keyword id="KW-0238">DNA-binding</keyword>
<keyword id="KW-0547">Nucleotide-binding</keyword>
<keyword id="KW-0742">SOS response</keyword>
<feature type="chain" id="PRO_1000193305" description="Protein RecA">
    <location>
        <begin position="1"/>
        <end position="357"/>
    </location>
</feature>
<feature type="binding site" evidence="1">
    <location>
        <begin position="73"/>
        <end position="80"/>
    </location>
    <ligand>
        <name>ATP</name>
        <dbReference type="ChEBI" id="CHEBI:30616"/>
    </ligand>
</feature>
<comment type="function">
    <text evidence="1">Can catalyze the hydrolysis of ATP in the presence of single-stranded DNA, the ATP-dependent uptake of single-stranded DNA by duplex DNA, and the ATP-dependent hybridization of homologous single-stranded DNAs. It interacts with LexA causing its activation and leading to its autocatalytic cleavage.</text>
</comment>
<comment type="subcellular location">
    <subcellularLocation>
        <location evidence="1">Cytoplasm</location>
    </subcellularLocation>
</comment>
<comment type="similarity">
    <text evidence="1">Belongs to the RecA family.</text>
</comment>
<proteinExistence type="inferred from homology"/>
<accession>B8DP00</accession>
<gene>
    <name evidence="1" type="primary">recA</name>
    <name type="ordered locus">DvMF_0876</name>
</gene>